<accession>A8XWB7</accession>
<comment type="function">
    <text evidence="2">Component of the ESCRT-I complex, a regulator of vesicular trafficking process.</text>
</comment>
<comment type="subunit">
    <text evidence="2">Component of the ESCRT-I complex (endosomal sorting complex required for transport I).</text>
</comment>
<comment type="subcellular location">
    <subcellularLocation>
        <location evidence="1">Endosome</location>
    </subcellularLocation>
</comment>
<comment type="similarity">
    <text evidence="3 4">Belongs to the VPS28 family.</text>
</comment>
<name>VPS28_CAEBR</name>
<proteinExistence type="inferred from homology"/>
<feature type="chain" id="PRO_0000394401" description="Vacuolar protein sorting-associated protein 28 homolog">
    <location>
        <begin position="1"/>
        <end position="209"/>
    </location>
</feature>
<feature type="domain" description="VPS28 N-terminal" evidence="4">
    <location>
        <begin position="1"/>
        <end position="105"/>
    </location>
</feature>
<feature type="domain" description="VPS28 C-terminal" evidence="3">
    <location>
        <begin position="109"/>
        <end position="205"/>
    </location>
</feature>
<protein>
    <recommendedName>
        <fullName evidence="2">Vacuolar protein sorting-associated protein 28 homolog</fullName>
    </recommendedName>
    <alternativeName>
        <fullName evidence="2">ESCRT-I complex subunit VPS28</fullName>
    </alternativeName>
</protein>
<evidence type="ECO:0000250" key="1">
    <source>
        <dbReference type="UniProtKB" id="Q02767"/>
    </source>
</evidence>
<evidence type="ECO:0000250" key="2">
    <source>
        <dbReference type="UniProtKB" id="Q9NA26"/>
    </source>
</evidence>
<evidence type="ECO:0000255" key="3">
    <source>
        <dbReference type="PROSITE-ProRule" id="PRU00642"/>
    </source>
</evidence>
<evidence type="ECO:0000255" key="4">
    <source>
        <dbReference type="PROSITE-ProRule" id="PRU00645"/>
    </source>
</evidence>
<evidence type="ECO:0000312" key="5">
    <source>
        <dbReference type="EMBL" id="CAP36936.1"/>
    </source>
</evidence>
<reference evidence="5" key="1">
    <citation type="journal article" date="2003" name="PLoS Biol.">
        <title>The genome sequence of Caenorhabditis briggsae: a platform for comparative genomics.</title>
        <authorList>
            <person name="Stein L.D."/>
            <person name="Bao Z."/>
            <person name="Blasiar D."/>
            <person name="Blumenthal T."/>
            <person name="Brent M.R."/>
            <person name="Chen N."/>
            <person name="Chinwalla A."/>
            <person name="Clarke L."/>
            <person name="Clee C."/>
            <person name="Coghlan A."/>
            <person name="Coulson A."/>
            <person name="D'Eustachio P."/>
            <person name="Fitch D.H.A."/>
            <person name="Fulton L.A."/>
            <person name="Fulton R.E."/>
            <person name="Griffiths-Jones S."/>
            <person name="Harris T.W."/>
            <person name="Hillier L.W."/>
            <person name="Kamath R."/>
            <person name="Kuwabara P.E."/>
            <person name="Mardis E.R."/>
            <person name="Marra M.A."/>
            <person name="Miner T.L."/>
            <person name="Minx P."/>
            <person name="Mullikin J.C."/>
            <person name="Plumb R.W."/>
            <person name="Rogers J."/>
            <person name="Schein J.E."/>
            <person name="Sohrmann M."/>
            <person name="Spieth J."/>
            <person name="Stajich J.E."/>
            <person name="Wei C."/>
            <person name="Willey D."/>
            <person name="Wilson R.K."/>
            <person name="Durbin R.M."/>
            <person name="Waterston R.H."/>
        </authorList>
    </citation>
    <scope>NUCLEOTIDE SEQUENCE [LARGE SCALE GENOMIC DNA]</scope>
    <source>
        <strain>AF16</strain>
    </source>
</reference>
<keyword id="KW-0967">Endosome</keyword>
<keyword id="KW-0653">Protein transport</keyword>
<keyword id="KW-1185">Reference proteome</keyword>
<keyword id="KW-0813">Transport</keyword>
<gene>
    <name evidence="5" type="primary">vps-28</name>
    <name type="ORF">CBG19782</name>
</gene>
<dbReference type="EMBL" id="HE601474">
    <property type="protein sequence ID" value="CAP36936.1"/>
    <property type="molecule type" value="Genomic_DNA"/>
</dbReference>
<dbReference type="SMR" id="A8XWB7"/>
<dbReference type="FunCoup" id="A8XWB7">
    <property type="interactions" value="2459"/>
</dbReference>
<dbReference type="STRING" id="6238.A8XWB7"/>
<dbReference type="EnsemblMetazoa" id="CBG19782.1">
    <property type="protein sequence ID" value="CBG19782.1"/>
    <property type="gene ID" value="WBGene00038947"/>
</dbReference>
<dbReference type="KEGG" id="cbr:CBG_19782"/>
<dbReference type="CTD" id="8582710"/>
<dbReference type="WormBase" id="CBG19782">
    <property type="protein sequence ID" value="CBP19690"/>
    <property type="gene ID" value="WBGene00038947"/>
    <property type="gene designation" value="Cbr-vps-28"/>
</dbReference>
<dbReference type="eggNOG" id="KOG3284">
    <property type="taxonomic scope" value="Eukaryota"/>
</dbReference>
<dbReference type="HOGENOM" id="CLU_076417_2_0_1"/>
<dbReference type="InParanoid" id="A8XWB7"/>
<dbReference type="OMA" id="CDEFPTV"/>
<dbReference type="Proteomes" id="UP000008549">
    <property type="component" value="Unassembled WGS sequence"/>
</dbReference>
<dbReference type="GO" id="GO:0000813">
    <property type="term" value="C:ESCRT I complex"/>
    <property type="evidence" value="ECO:0000318"/>
    <property type="project" value="GO_Central"/>
</dbReference>
<dbReference type="GO" id="GO:0044877">
    <property type="term" value="F:protein-containing complex binding"/>
    <property type="evidence" value="ECO:0000318"/>
    <property type="project" value="GO_Central"/>
</dbReference>
<dbReference type="GO" id="GO:0043328">
    <property type="term" value="P:protein transport to vacuole involved in ubiquitin-dependent protein catabolic process via the multivesicular body sorting pathway"/>
    <property type="evidence" value="ECO:0000318"/>
    <property type="project" value="GO_Central"/>
</dbReference>
<dbReference type="GO" id="GO:0032801">
    <property type="term" value="P:receptor catabolic process"/>
    <property type="evidence" value="ECO:0007669"/>
    <property type="project" value="EnsemblMetazoa"/>
</dbReference>
<dbReference type="FunFam" id="1.20.120.1130:FF:000001">
    <property type="entry name" value="Vacuolar protein sorting-associated protein 28 homolog"/>
    <property type="match status" value="1"/>
</dbReference>
<dbReference type="FunFam" id="1.20.1440.200:FF:000007">
    <property type="entry name" value="Vacuolar protein sorting-associated protein 28 homolog"/>
    <property type="match status" value="1"/>
</dbReference>
<dbReference type="Gene3D" id="1.20.120.1130">
    <property type="match status" value="1"/>
</dbReference>
<dbReference type="Gene3D" id="1.20.1440.200">
    <property type="match status" value="1"/>
</dbReference>
<dbReference type="InterPro" id="IPR037202">
    <property type="entry name" value="ESCRT_assembly_dom"/>
</dbReference>
<dbReference type="InterPro" id="IPR007143">
    <property type="entry name" value="Vps28"/>
</dbReference>
<dbReference type="InterPro" id="IPR017899">
    <property type="entry name" value="VPS28_C"/>
</dbReference>
<dbReference type="InterPro" id="IPR037206">
    <property type="entry name" value="VPS28_C_sf"/>
</dbReference>
<dbReference type="InterPro" id="IPR017898">
    <property type="entry name" value="VPS28_N"/>
</dbReference>
<dbReference type="InterPro" id="IPR038358">
    <property type="entry name" value="VPS28_N_sf"/>
</dbReference>
<dbReference type="PANTHER" id="PTHR12937">
    <property type="entry name" value="VACUOLAR PROTEIN SORTING 28, ISOFORM 2 VPS28"/>
    <property type="match status" value="1"/>
</dbReference>
<dbReference type="PANTHER" id="PTHR12937:SF0">
    <property type="entry name" value="VACUOLAR PROTEIN SORTING-ASSOCIATED PROTEIN 28 HOMOLOG"/>
    <property type="match status" value="1"/>
</dbReference>
<dbReference type="Pfam" id="PF03997">
    <property type="entry name" value="VPS28"/>
    <property type="match status" value="1"/>
</dbReference>
<dbReference type="PIRSF" id="PIRSF017535">
    <property type="entry name" value="VPS28"/>
    <property type="match status" value="1"/>
</dbReference>
<dbReference type="SUPFAM" id="SSF140111">
    <property type="entry name" value="Endosomal sorting complex assembly domain"/>
    <property type="match status" value="1"/>
</dbReference>
<dbReference type="SUPFAM" id="SSF140427">
    <property type="entry name" value="VPS28 C-terminal domain-like"/>
    <property type="match status" value="1"/>
</dbReference>
<dbReference type="PROSITE" id="PS51310">
    <property type="entry name" value="VPS28_C"/>
    <property type="match status" value="1"/>
</dbReference>
<dbReference type="PROSITE" id="PS51313">
    <property type="entry name" value="VPS28_N"/>
    <property type="match status" value="1"/>
</dbReference>
<organism>
    <name type="scientific">Caenorhabditis briggsae</name>
    <dbReference type="NCBI Taxonomy" id="6238"/>
    <lineage>
        <taxon>Eukaryota</taxon>
        <taxon>Metazoa</taxon>
        <taxon>Ecdysozoa</taxon>
        <taxon>Nematoda</taxon>
        <taxon>Chromadorea</taxon>
        <taxon>Rhabditida</taxon>
        <taxon>Rhabditina</taxon>
        <taxon>Rhabditomorpha</taxon>
        <taxon>Rhabditoidea</taxon>
        <taxon>Rhabditidae</taxon>
        <taxon>Peloderinae</taxon>
        <taxon>Caenorhabditis</taxon>
    </lineage>
</organism>
<sequence>MSQNSNLMREVRLFENHSEREQMENLSELFAVLNALEHLEKMFSRDHVTADEYKTECFKLIDQYKVTMRLVHGATSIEEFAKKYRLHCPAAIERIREGRPITVKDDQGNVLKHIASIVEQFITFLDSLRLNTRAVDDLYPVLDDLYNAINSTSRVPIDANVTTKVKKWHDRLSSMAATDEISDDEARQMIFDTEGAYQSFQKALNEQKH</sequence>